<gene>
    <name type="ordered locus">MJ0795.1</name>
</gene>
<proteinExistence type="predicted"/>
<reference key="1">
    <citation type="journal article" date="1996" name="Science">
        <title>Complete genome sequence of the methanogenic archaeon, Methanococcus jannaschii.</title>
        <authorList>
            <person name="Bult C.J."/>
            <person name="White O."/>
            <person name="Olsen G.J."/>
            <person name="Zhou L."/>
            <person name="Fleischmann R.D."/>
            <person name="Sutton G.G."/>
            <person name="Blake J.A."/>
            <person name="FitzGerald L.M."/>
            <person name="Clayton R.A."/>
            <person name="Gocayne J.D."/>
            <person name="Kerlavage A.R."/>
            <person name="Dougherty B.A."/>
            <person name="Tomb J.-F."/>
            <person name="Adams M.D."/>
            <person name="Reich C.I."/>
            <person name="Overbeek R."/>
            <person name="Kirkness E.F."/>
            <person name="Weinstock K.G."/>
            <person name="Merrick J.M."/>
            <person name="Glodek A."/>
            <person name="Scott J.L."/>
            <person name="Geoghagen N.S.M."/>
            <person name="Weidman J.F."/>
            <person name="Fuhrmann J.L."/>
            <person name="Nguyen D."/>
            <person name="Utterback T.R."/>
            <person name="Kelley J.M."/>
            <person name="Peterson J.D."/>
            <person name="Sadow P.W."/>
            <person name="Hanna M.C."/>
            <person name="Cotton M.D."/>
            <person name="Roberts K.M."/>
            <person name="Hurst M.A."/>
            <person name="Kaine B.P."/>
            <person name="Borodovsky M."/>
            <person name="Klenk H.-P."/>
            <person name="Fraser C.M."/>
            <person name="Smith H.O."/>
            <person name="Woese C.R."/>
            <person name="Venter J.C."/>
        </authorList>
    </citation>
    <scope>NUCLEOTIDE SEQUENCE [LARGE SCALE GENOMIC DNA]</scope>
    <source>
        <strain>ATCC 43067 / DSM 2661 / JAL-1 / JCM 10045 / NBRC 100440</strain>
    </source>
</reference>
<evidence type="ECO:0000255" key="1"/>
<evidence type="ECO:0000305" key="2"/>
<name>Y79B_METJA</name>
<sequence length="170" mass="19689">MKGINPFYFYIGMALILASIVSILLITKSILLFILLAFGSLVGITLILIYISRKILKIDKGRLKKEVKRIFGNRVYKILRLMLVLGYAGFIYFSGTFYNSAVLFFIFIVAFTISEFYKTYRIRIYEKGILIEGIAFYSWEEIEKTTNKDKNQTILKIKGIPKKIVINEII</sequence>
<accession>P81233</accession>
<organism>
    <name type="scientific">Methanocaldococcus jannaschii (strain ATCC 43067 / DSM 2661 / JAL-1 / JCM 10045 / NBRC 100440)</name>
    <name type="common">Methanococcus jannaschii</name>
    <dbReference type="NCBI Taxonomy" id="243232"/>
    <lineage>
        <taxon>Archaea</taxon>
        <taxon>Methanobacteriati</taxon>
        <taxon>Methanobacteriota</taxon>
        <taxon>Methanomada group</taxon>
        <taxon>Methanococci</taxon>
        <taxon>Methanococcales</taxon>
        <taxon>Methanocaldococcaceae</taxon>
        <taxon>Methanocaldococcus</taxon>
    </lineage>
</organism>
<dbReference type="EMBL" id="L77117">
    <property type="protein sequence ID" value="AAB98801.1"/>
    <property type="molecule type" value="Genomic_DNA"/>
</dbReference>
<dbReference type="RefSeq" id="WP_010870304.1">
    <property type="nucleotide sequence ID" value="NC_000909.1"/>
</dbReference>
<dbReference type="STRING" id="243232.MJ_0795.1"/>
<dbReference type="PaxDb" id="243232-MJ_0795.1"/>
<dbReference type="EnsemblBacteria" id="AAB98801">
    <property type="protein sequence ID" value="AAB98801"/>
    <property type="gene ID" value="MJ_0795.1"/>
</dbReference>
<dbReference type="GeneID" id="1451676"/>
<dbReference type="KEGG" id="mja:MJ_0795.1"/>
<dbReference type="eggNOG" id="arCOG09674">
    <property type="taxonomic scope" value="Archaea"/>
</dbReference>
<dbReference type="HOGENOM" id="CLU_1451435_0_0_2"/>
<dbReference type="InParanoid" id="P81233"/>
<dbReference type="OrthoDB" id="66106at2157"/>
<dbReference type="PhylomeDB" id="P81233"/>
<dbReference type="Proteomes" id="UP000000805">
    <property type="component" value="Chromosome"/>
</dbReference>
<dbReference type="GO" id="GO:0005886">
    <property type="term" value="C:plasma membrane"/>
    <property type="evidence" value="ECO:0007669"/>
    <property type="project" value="UniProtKB-SubCell"/>
</dbReference>
<comment type="subcellular location">
    <subcellularLocation>
        <location evidence="2">Cell membrane</location>
        <topology evidence="2">Multi-pass membrane protein</topology>
    </subcellularLocation>
</comment>
<comment type="similarity">
    <text evidence="2">To M.jannaschii MJ1249.1, MJ0210.1 and MJ0785.1.</text>
</comment>
<protein>
    <recommendedName>
        <fullName>Uncharacterized protein MJ0795.1</fullName>
    </recommendedName>
</protein>
<keyword id="KW-1003">Cell membrane</keyword>
<keyword id="KW-0472">Membrane</keyword>
<keyword id="KW-1185">Reference proteome</keyword>
<keyword id="KW-0812">Transmembrane</keyword>
<keyword id="KW-1133">Transmembrane helix</keyword>
<feature type="chain" id="PRO_0000107047" description="Uncharacterized protein MJ0795.1">
    <location>
        <begin position="1"/>
        <end position="170"/>
    </location>
</feature>
<feature type="transmembrane region" description="Helical" evidence="1">
    <location>
        <begin position="6"/>
        <end position="26"/>
    </location>
</feature>
<feature type="transmembrane region" description="Helical" evidence="1">
    <location>
        <begin position="31"/>
        <end position="51"/>
    </location>
</feature>
<feature type="transmembrane region" description="Helical" evidence="1">
    <location>
        <begin position="91"/>
        <end position="111"/>
    </location>
</feature>